<reference key="1">
    <citation type="journal article" date="2011" name="PLoS Genet.">
        <title>The evolution of host specialization in the vertebrate gut symbiont Lactobacillus reuteri.</title>
        <authorList>
            <person name="Frese S.A."/>
            <person name="Benson A.K."/>
            <person name="Tannock G.W."/>
            <person name="Loach D.M."/>
            <person name="Kim J."/>
            <person name="Zhang M."/>
            <person name="Oh P.L."/>
            <person name="Heng N.C."/>
            <person name="Patil P.B."/>
            <person name="Juge N."/>
            <person name="Mackenzie D.A."/>
            <person name="Pearson B.M."/>
            <person name="Lapidus A."/>
            <person name="Dalin E."/>
            <person name="Tice H."/>
            <person name="Goltsman E."/>
            <person name="Land M."/>
            <person name="Hauser L."/>
            <person name="Ivanova N."/>
            <person name="Kyrpides N.C."/>
            <person name="Walter J."/>
        </authorList>
    </citation>
    <scope>NUCLEOTIDE SEQUENCE [LARGE SCALE GENOMIC DNA]</scope>
    <source>
        <strain>DSM 20016</strain>
    </source>
</reference>
<accession>A5VJH6</accession>
<keyword id="KW-0963">Cytoplasm</keyword>
<keyword id="KW-0255">Endonuclease</keyword>
<keyword id="KW-0378">Hydrolase</keyword>
<keyword id="KW-0479">Metal-binding</keyword>
<keyword id="KW-0540">Nuclease</keyword>
<keyword id="KW-1185">Reference proteome</keyword>
<keyword id="KW-0690">Ribosome biogenesis</keyword>
<keyword id="KW-0698">rRNA processing</keyword>
<keyword id="KW-0862">Zinc</keyword>
<protein>
    <recommendedName>
        <fullName evidence="1">Endoribonuclease YbeY</fullName>
        <ecNumber evidence="1">3.1.-.-</ecNumber>
    </recommendedName>
</protein>
<name>YBEY_LIMRD</name>
<organism>
    <name type="scientific">Limosilactobacillus reuteri (strain DSM 20016)</name>
    <name type="common">Lactobacillus reuteri</name>
    <dbReference type="NCBI Taxonomy" id="557436"/>
    <lineage>
        <taxon>Bacteria</taxon>
        <taxon>Bacillati</taxon>
        <taxon>Bacillota</taxon>
        <taxon>Bacilli</taxon>
        <taxon>Lactobacillales</taxon>
        <taxon>Lactobacillaceae</taxon>
        <taxon>Limosilactobacillus</taxon>
    </lineage>
</organism>
<evidence type="ECO:0000255" key="1">
    <source>
        <dbReference type="HAMAP-Rule" id="MF_00009"/>
    </source>
</evidence>
<proteinExistence type="inferred from homology"/>
<sequence>MDLEIFDQTTAQLPNEQLEMVRDLLQYAAKELSLSENTEMSLTFVNNPEIKKLNAQYRNVDRATDVLSFAAEEAGDETPIIMDPEMAAEIPVNLGDLFISIDKVAEQAKFLGHSVDRELGFLAVHGFLHLNGYDHEEPADEEKMFKLQREILDGYGLTR</sequence>
<comment type="function">
    <text evidence="1">Single strand-specific metallo-endoribonuclease involved in late-stage 70S ribosome quality control and in maturation of the 3' terminus of the 16S rRNA.</text>
</comment>
<comment type="cofactor">
    <cofactor evidence="1">
        <name>Zn(2+)</name>
        <dbReference type="ChEBI" id="CHEBI:29105"/>
    </cofactor>
    <text evidence="1">Binds 1 zinc ion.</text>
</comment>
<comment type="subcellular location">
    <subcellularLocation>
        <location evidence="1">Cytoplasm</location>
    </subcellularLocation>
</comment>
<comment type="similarity">
    <text evidence="1">Belongs to the endoribonuclease YbeY family.</text>
</comment>
<feature type="chain" id="PRO_1000057072" description="Endoribonuclease YbeY">
    <location>
        <begin position="1"/>
        <end position="159"/>
    </location>
</feature>
<feature type="binding site" evidence="1">
    <location>
        <position position="125"/>
    </location>
    <ligand>
        <name>Zn(2+)</name>
        <dbReference type="ChEBI" id="CHEBI:29105"/>
        <note>catalytic</note>
    </ligand>
</feature>
<feature type="binding site" evidence="1">
    <location>
        <position position="129"/>
    </location>
    <ligand>
        <name>Zn(2+)</name>
        <dbReference type="ChEBI" id="CHEBI:29105"/>
        <note>catalytic</note>
    </ligand>
</feature>
<feature type="binding site" evidence="1">
    <location>
        <position position="135"/>
    </location>
    <ligand>
        <name>Zn(2+)</name>
        <dbReference type="ChEBI" id="CHEBI:29105"/>
        <note>catalytic</note>
    </ligand>
</feature>
<gene>
    <name evidence="1" type="primary">ybeY</name>
    <name type="ordered locus">Lreu_0736</name>
</gene>
<dbReference type="EC" id="3.1.-.-" evidence="1"/>
<dbReference type="EMBL" id="CP000705">
    <property type="protein sequence ID" value="ABQ83000.1"/>
    <property type="molecule type" value="Genomic_DNA"/>
</dbReference>
<dbReference type="RefSeq" id="WP_003665856.1">
    <property type="nucleotide sequence ID" value="NZ_AZDD01000029.1"/>
</dbReference>
<dbReference type="SMR" id="A5VJH6"/>
<dbReference type="STRING" id="557436.Lreu_0736"/>
<dbReference type="KEGG" id="lre:Lreu_0736"/>
<dbReference type="eggNOG" id="COG0319">
    <property type="taxonomic scope" value="Bacteria"/>
</dbReference>
<dbReference type="HOGENOM" id="CLU_106710_3_0_9"/>
<dbReference type="Proteomes" id="UP000001991">
    <property type="component" value="Chromosome"/>
</dbReference>
<dbReference type="GO" id="GO:0005737">
    <property type="term" value="C:cytoplasm"/>
    <property type="evidence" value="ECO:0007669"/>
    <property type="project" value="UniProtKB-SubCell"/>
</dbReference>
<dbReference type="GO" id="GO:0004222">
    <property type="term" value="F:metalloendopeptidase activity"/>
    <property type="evidence" value="ECO:0007669"/>
    <property type="project" value="InterPro"/>
</dbReference>
<dbReference type="GO" id="GO:0004521">
    <property type="term" value="F:RNA endonuclease activity"/>
    <property type="evidence" value="ECO:0007669"/>
    <property type="project" value="UniProtKB-UniRule"/>
</dbReference>
<dbReference type="GO" id="GO:0008270">
    <property type="term" value="F:zinc ion binding"/>
    <property type="evidence" value="ECO:0007669"/>
    <property type="project" value="UniProtKB-UniRule"/>
</dbReference>
<dbReference type="GO" id="GO:0006364">
    <property type="term" value="P:rRNA processing"/>
    <property type="evidence" value="ECO:0007669"/>
    <property type="project" value="UniProtKB-UniRule"/>
</dbReference>
<dbReference type="Gene3D" id="3.40.390.30">
    <property type="entry name" value="Metalloproteases ('zincins'), catalytic domain"/>
    <property type="match status" value="1"/>
</dbReference>
<dbReference type="HAMAP" id="MF_00009">
    <property type="entry name" value="Endoribonucl_YbeY"/>
    <property type="match status" value="1"/>
</dbReference>
<dbReference type="InterPro" id="IPR023091">
    <property type="entry name" value="MetalPrtase_cat_dom_sf_prd"/>
</dbReference>
<dbReference type="InterPro" id="IPR002036">
    <property type="entry name" value="YbeY"/>
</dbReference>
<dbReference type="InterPro" id="IPR020549">
    <property type="entry name" value="YbeY_CS"/>
</dbReference>
<dbReference type="NCBIfam" id="TIGR00043">
    <property type="entry name" value="rRNA maturation RNase YbeY"/>
    <property type="match status" value="1"/>
</dbReference>
<dbReference type="PANTHER" id="PTHR46986">
    <property type="entry name" value="ENDORIBONUCLEASE YBEY, CHLOROPLASTIC"/>
    <property type="match status" value="1"/>
</dbReference>
<dbReference type="PANTHER" id="PTHR46986:SF1">
    <property type="entry name" value="ENDORIBONUCLEASE YBEY, CHLOROPLASTIC"/>
    <property type="match status" value="1"/>
</dbReference>
<dbReference type="Pfam" id="PF02130">
    <property type="entry name" value="YbeY"/>
    <property type="match status" value="1"/>
</dbReference>
<dbReference type="SUPFAM" id="SSF55486">
    <property type="entry name" value="Metalloproteases ('zincins'), catalytic domain"/>
    <property type="match status" value="1"/>
</dbReference>
<dbReference type="PROSITE" id="PS01306">
    <property type="entry name" value="UPF0054"/>
    <property type="match status" value="1"/>
</dbReference>